<comment type="function">
    <text evidence="1">The RuvA-RuvB-RuvC complex processes Holliday junction (HJ) DNA during genetic recombination and DNA repair, while the RuvA-RuvB complex plays an important role in the rescue of blocked DNA replication forks via replication fork reversal (RFR). RuvA specifically binds to HJ cruciform DNA, conferring on it an open structure. The RuvB hexamer acts as an ATP-dependent pump, pulling dsDNA into and through the RuvAB complex. HJ branch migration allows RuvC to scan DNA until it finds its consensus sequence, where it cleaves and resolves the cruciform DNA.</text>
</comment>
<comment type="subunit">
    <text evidence="1">Homotetramer. Forms an RuvA(8)-RuvB(12)-Holliday junction (HJ) complex. HJ DNA is sandwiched between 2 RuvA tetramers; dsDNA enters through RuvA and exits via RuvB. An RuvB hexamer assembles on each DNA strand where it exits the tetramer. Each RuvB hexamer is contacted by two RuvA subunits (via domain III) on 2 adjacent RuvB subunits; this complex drives branch migration. In the full resolvosome a probable DNA-RuvA(4)-RuvB(12)-RuvC(2) complex forms which resolves the HJ.</text>
</comment>
<comment type="subcellular location">
    <subcellularLocation>
        <location evidence="1">Cytoplasm</location>
    </subcellularLocation>
</comment>
<comment type="domain">
    <text evidence="1">Has three domains with a flexible linker between the domains II and III and assumes an 'L' shape. Domain III is highly mobile and contacts RuvB.</text>
</comment>
<comment type="similarity">
    <text evidence="1">Belongs to the RuvA family.</text>
</comment>
<proteinExistence type="inferred from homology"/>
<feature type="chain" id="PRO_1000002557" description="Holliday junction branch migration complex subunit RuvA">
    <location>
        <begin position="1"/>
        <end position="205"/>
    </location>
</feature>
<feature type="region of interest" description="Domain I" evidence="1">
    <location>
        <begin position="1"/>
        <end position="64"/>
    </location>
</feature>
<feature type="region of interest" description="Domain II" evidence="1">
    <location>
        <begin position="65"/>
        <end position="143"/>
    </location>
</feature>
<feature type="region of interest" description="Flexible linker" evidence="1">
    <location>
        <begin position="144"/>
        <end position="153"/>
    </location>
</feature>
<feature type="region of interest" description="Domain III" evidence="1">
    <location>
        <begin position="153"/>
        <end position="205"/>
    </location>
</feature>
<accession>A6UCT8</accession>
<keyword id="KW-0963">Cytoplasm</keyword>
<keyword id="KW-0227">DNA damage</keyword>
<keyword id="KW-0233">DNA recombination</keyword>
<keyword id="KW-0234">DNA repair</keyword>
<keyword id="KW-0238">DNA-binding</keyword>
<sequence length="205" mass="21385">MIGKLKGTIDEIGEDHVVLDVHGVGYVAHCSARTLAKLGRAGEAAVLFIETYVREDQLKLFGFLSALEREWFRLLQSVQGVGSKVALAVLSTLTPGELANAIALQDKTSISRAPGVGPKVAVRIVTELKNKAPAFVGEMAPSIGLKQELGEGVAAAPVSDAVSALTNLGYSRDQAANAVAAALKNGGEGADSARLIRLGLKELSR</sequence>
<dbReference type="EMBL" id="CP000738">
    <property type="protein sequence ID" value="ABR61468.1"/>
    <property type="molecule type" value="Genomic_DNA"/>
</dbReference>
<dbReference type="RefSeq" id="WP_012066857.1">
    <property type="nucleotide sequence ID" value="NC_009636.1"/>
</dbReference>
<dbReference type="RefSeq" id="YP_001328303.1">
    <property type="nucleotide sequence ID" value="NC_009636.1"/>
</dbReference>
<dbReference type="SMR" id="A6UCT8"/>
<dbReference type="STRING" id="366394.Smed_2638"/>
<dbReference type="GeneID" id="61611832"/>
<dbReference type="KEGG" id="smd:Smed_2638"/>
<dbReference type="PATRIC" id="fig|366394.8.peg.5836"/>
<dbReference type="eggNOG" id="COG0632">
    <property type="taxonomic scope" value="Bacteria"/>
</dbReference>
<dbReference type="HOGENOM" id="CLU_087936_3_0_5"/>
<dbReference type="OrthoDB" id="5293449at2"/>
<dbReference type="Proteomes" id="UP000001108">
    <property type="component" value="Chromosome"/>
</dbReference>
<dbReference type="GO" id="GO:0005737">
    <property type="term" value="C:cytoplasm"/>
    <property type="evidence" value="ECO:0007669"/>
    <property type="project" value="UniProtKB-SubCell"/>
</dbReference>
<dbReference type="GO" id="GO:0009379">
    <property type="term" value="C:Holliday junction helicase complex"/>
    <property type="evidence" value="ECO:0007669"/>
    <property type="project" value="InterPro"/>
</dbReference>
<dbReference type="GO" id="GO:0048476">
    <property type="term" value="C:Holliday junction resolvase complex"/>
    <property type="evidence" value="ECO:0007669"/>
    <property type="project" value="UniProtKB-UniRule"/>
</dbReference>
<dbReference type="GO" id="GO:0005524">
    <property type="term" value="F:ATP binding"/>
    <property type="evidence" value="ECO:0007669"/>
    <property type="project" value="InterPro"/>
</dbReference>
<dbReference type="GO" id="GO:0000400">
    <property type="term" value="F:four-way junction DNA binding"/>
    <property type="evidence" value="ECO:0007669"/>
    <property type="project" value="UniProtKB-UniRule"/>
</dbReference>
<dbReference type="GO" id="GO:0009378">
    <property type="term" value="F:four-way junction helicase activity"/>
    <property type="evidence" value="ECO:0007669"/>
    <property type="project" value="InterPro"/>
</dbReference>
<dbReference type="GO" id="GO:0006310">
    <property type="term" value="P:DNA recombination"/>
    <property type="evidence" value="ECO:0007669"/>
    <property type="project" value="UniProtKB-UniRule"/>
</dbReference>
<dbReference type="GO" id="GO:0006281">
    <property type="term" value="P:DNA repair"/>
    <property type="evidence" value="ECO:0007669"/>
    <property type="project" value="UniProtKB-UniRule"/>
</dbReference>
<dbReference type="CDD" id="cd14332">
    <property type="entry name" value="UBA_RuvA_C"/>
    <property type="match status" value="1"/>
</dbReference>
<dbReference type="Gene3D" id="1.10.150.20">
    <property type="entry name" value="5' to 3' exonuclease, C-terminal subdomain"/>
    <property type="match status" value="1"/>
</dbReference>
<dbReference type="Gene3D" id="1.10.8.10">
    <property type="entry name" value="DNA helicase RuvA subunit, C-terminal domain"/>
    <property type="match status" value="1"/>
</dbReference>
<dbReference type="Gene3D" id="2.40.50.140">
    <property type="entry name" value="Nucleic acid-binding proteins"/>
    <property type="match status" value="1"/>
</dbReference>
<dbReference type="HAMAP" id="MF_00031">
    <property type="entry name" value="DNA_HJ_migration_RuvA"/>
    <property type="match status" value="1"/>
</dbReference>
<dbReference type="InterPro" id="IPR013849">
    <property type="entry name" value="DNA_helicase_Holl-junc_RuvA_I"/>
</dbReference>
<dbReference type="InterPro" id="IPR012340">
    <property type="entry name" value="NA-bd_OB-fold"/>
</dbReference>
<dbReference type="InterPro" id="IPR000085">
    <property type="entry name" value="RuvA"/>
</dbReference>
<dbReference type="InterPro" id="IPR010994">
    <property type="entry name" value="RuvA_2-like"/>
</dbReference>
<dbReference type="InterPro" id="IPR011114">
    <property type="entry name" value="RuvA_C"/>
</dbReference>
<dbReference type="InterPro" id="IPR036267">
    <property type="entry name" value="RuvA_C_sf"/>
</dbReference>
<dbReference type="NCBIfam" id="TIGR00084">
    <property type="entry name" value="ruvA"/>
    <property type="match status" value="1"/>
</dbReference>
<dbReference type="Pfam" id="PF14520">
    <property type="entry name" value="HHH_5"/>
    <property type="match status" value="1"/>
</dbReference>
<dbReference type="Pfam" id="PF07499">
    <property type="entry name" value="RuvA_C"/>
    <property type="match status" value="1"/>
</dbReference>
<dbReference type="Pfam" id="PF01330">
    <property type="entry name" value="RuvA_N"/>
    <property type="match status" value="1"/>
</dbReference>
<dbReference type="SUPFAM" id="SSF46929">
    <property type="entry name" value="DNA helicase RuvA subunit, C-terminal domain"/>
    <property type="match status" value="1"/>
</dbReference>
<dbReference type="SUPFAM" id="SSF50249">
    <property type="entry name" value="Nucleic acid-binding proteins"/>
    <property type="match status" value="1"/>
</dbReference>
<dbReference type="SUPFAM" id="SSF47781">
    <property type="entry name" value="RuvA domain 2-like"/>
    <property type="match status" value="1"/>
</dbReference>
<organism>
    <name type="scientific">Sinorhizobium medicae (strain WSM419)</name>
    <name type="common">Ensifer medicae</name>
    <dbReference type="NCBI Taxonomy" id="366394"/>
    <lineage>
        <taxon>Bacteria</taxon>
        <taxon>Pseudomonadati</taxon>
        <taxon>Pseudomonadota</taxon>
        <taxon>Alphaproteobacteria</taxon>
        <taxon>Hyphomicrobiales</taxon>
        <taxon>Rhizobiaceae</taxon>
        <taxon>Sinorhizobium/Ensifer group</taxon>
        <taxon>Sinorhizobium</taxon>
    </lineage>
</organism>
<reference key="1">
    <citation type="submission" date="2007-06" db="EMBL/GenBank/DDBJ databases">
        <title>Complete sequence of Sinorhizobium medicae WSM419 chromosome.</title>
        <authorList>
            <consortium name="US DOE Joint Genome Institute"/>
            <person name="Copeland A."/>
            <person name="Lucas S."/>
            <person name="Lapidus A."/>
            <person name="Barry K."/>
            <person name="Glavina del Rio T."/>
            <person name="Dalin E."/>
            <person name="Tice H."/>
            <person name="Pitluck S."/>
            <person name="Chain P."/>
            <person name="Malfatti S."/>
            <person name="Shin M."/>
            <person name="Vergez L."/>
            <person name="Schmutz J."/>
            <person name="Larimer F."/>
            <person name="Land M."/>
            <person name="Hauser L."/>
            <person name="Kyrpides N."/>
            <person name="Mikhailova N."/>
            <person name="Reeve W.G."/>
            <person name="Richardson P."/>
        </authorList>
    </citation>
    <scope>NUCLEOTIDE SEQUENCE [LARGE SCALE GENOMIC DNA]</scope>
    <source>
        <strain>WSM419</strain>
    </source>
</reference>
<gene>
    <name evidence="1" type="primary">ruvA</name>
    <name type="ordered locus">Smed_2638</name>
</gene>
<evidence type="ECO:0000255" key="1">
    <source>
        <dbReference type="HAMAP-Rule" id="MF_00031"/>
    </source>
</evidence>
<protein>
    <recommendedName>
        <fullName evidence="1">Holliday junction branch migration complex subunit RuvA</fullName>
    </recommendedName>
</protein>
<name>RUVA_SINMW</name>